<reference key="1">
    <citation type="journal article" date="2001" name="J. Exp. Bot.">
        <title>Identification of novel cyclin-dependent kinases interacting with the CKS1 protein of Arabidopsis.</title>
        <authorList>
            <person name="Boudolf V."/>
            <person name="Rombauts S."/>
            <person name="Naudts M."/>
            <person name="Inze D."/>
            <person name="de Veylder L."/>
        </authorList>
    </citation>
    <scope>NUCLEOTIDE SEQUENCE [MRNA]</scope>
    <scope>TISSUE SPECIFICITY</scope>
    <scope>INTERACTION WITH CKS1</scope>
</reference>
<reference key="2">
    <citation type="journal article" date="1999" name="Nature">
        <title>Sequence and analysis of chromosome 2 of the plant Arabidopsis thaliana.</title>
        <authorList>
            <person name="Lin X."/>
            <person name="Kaul S."/>
            <person name="Rounsley S.D."/>
            <person name="Shea T.P."/>
            <person name="Benito M.-I."/>
            <person name="Town C.D."/>
            <person name="Fujii C.Y."/>
            <person name="Mason T.M."/>
            <person name="Bowman C.L."/>
            <person name="Barnstead M.E."/>
            <person name="Feldblyum T.V."/>
            <person name="Buell C.R."/>
            <person name="Ketchum K.A."/>
            <person name="Lee J.J."/>
            <person name="Ronning C.M."/>
            <person name="Koo H.L."/>
            <person name="Moffat K.S."/>
            <person name="Cronin L.A."/>
            <person name="Shen M."/>
            <person name="Pai G."/>
            <person name="Van Aken S."/>
            <person name="Umayam L."/>
            <person name="Tallon L.J."/>
            <person name="Gill J.E."/>
            <person name="Adams M.D."/>
            <person name="Carrera A.J."/>
            <person name="Creasy T.H."/>
            <person name="Goodman H.M."/>
            <person name="Somerville C.R."/>
            <person name="Copenhaver G.P."/>
            <person name="Preuss D."/>
            <person name="Nierman W.C."/>
            <person name="White O."/>
            <person name="Eisen J.A."/>
            <person name="Salzberg S.L."/>
            <person name="Fraser C.M."/>
            <person name="Venter J.C."/>
        </authorList>
    </citation>
    <scope>NUCLEOTIDE SEQUENCE [LARGE SCALE GENOMIC DNA]</scope>
    <source>
        <strain>cv. Columbia</strain>
    </source>
</reference>
<reference key="3">
    <citation type="journal article" date="2017" name="Plant J.">
        <title>Araport11: a complete reannotation of the Arabidopsis thaliana reference genome.</title>
        <authorList>
            <person name="Cheng C.Y."/>
            <person name="Krishnakumar V."/>
            <person name="Chan A.P."/>
            <person name="Thibaud-Nissen F."/>
            <person name="Schobel S."/>
            <person name="Town C.D."/>
        </authorList>
    </citation>
    <scope>GENOME REANNOTATION</scope>
    <source>
        <strain>cv. Columbia</strain>
    </source>
</reference>
<reference key="4">
    <citation type="submission" date="2005-03" db="EMBL/GenBank/DDBJ databases">
        <title>Large-scale analysis of RIKEN Arabidopsis full-length (RAFL) cDNAs.</title>
        <authorList>
            <person name="Totoki Y."/>
            <person name="Seki M."/>
            <person name="Ishida J."/>
            <person name="Nakajima M."/>
            <person name="Enju A."/>
            <person name="Kamiya A."/>
            <person name="Narusaka M."/>
            <person name="Shin-i T."/>
            <person name="Nakagawa M."/>
            <person name="Sakamoto N."/>
            <person name="Oishi K."/>
            <person name="Kohara Y."/>
            <person name="Kobayashi M."/>
            <person name="Toyoda A."/>
            <person name="Sakaki Y."/>
            <person name="Sakurai T."/>
            <person name="Iida K."/>
            <person name="Akiyama K."/>
            <person name="Satou M."/>
            <person name="Toyoda T."/>
            <person name="Konagaya A."/>
            <person name="Carninci P."/>
            <person name="Kawai J."/>
            <person name="Hayashizaki Y."/>
            <person name="Shinozaki K."/>
        </authorList>
    </citation>
    <scope>NUCLEOTIDE SEQUENCE [LARGE SCALE MRNA]</scope>
    <source>
        <strain>cv. Columbia</strain>
    </source>
</reference>
<reference key="5">
    <citation type="journal article" date="2002" name="Plant Cell">
        <title>Genome-wide analysis of core cell cycle genes in Arabidopsis.</title>
        <authorList>
            <person name="Vandepoele K."/>
            <person name="Raes J."/>
            <person name="de Veylder L."/>
            <person name="Rouze P."/>
            <person name="Rombauts S."/>
            <person name="Inze D."/>
        </authorList>
    </citation>
    <scope>GENE FAMILY</scope>
    <scope>NOMENCLATURE</scope>
</reference>
<reference key="6">
    <citation type="journal article" date="2006" name="Annu. Rev. Genet.">
        <title>Cell cycle regulation in plant development.</title>
        <authorList>
            <person name="Inze D."/>
            <person name="de Veylder L."/>
        </authorList>
    </citation>
    <scope>REVIEW</scope>
</reference>
<reference key="7">
    <citation type="journal article" date="2010" name="Plant Cell">
        <title>Regulation of cell proliferation in the stomatal lineage by the Arabidopsis MYB FOUR LIPS via direct targeting of core cell cycle genes.</title>
        <authorList>
            <person name="Xie Z."/>
            <person name="Lee E."/>
            <person name="Lucas J.R."/>
            <person name="Morohashi K."/>
            <person name="Li D."/>
            <person name="Murray J.A."/>
            <person name="Sack F.D."/>
            <person name="Grotewold E."/>
        </authorList>
    </citation>
    <scope>FUNCTION</scope>
    <scope>DISRUPTION PHENOTYPE</scope>
    <source>
        <strain>cv. Columbia</strain>
    </source>
</reference>
<reference key="8">
    <citation type="journal article" date="2013" name="J. Exp. Bot.">
        <title>FOUR LIPS and MYB88 conditionally restrict the G1/S transition during stomatal formation.</title>
        <authorList>
            <person name="Lee E."/>
            <person name="Liu X."/>
            <person name="Eglit Y."/>
            <person name="Sack F."/>
        </authorList>
    </citation>
    <scope>FUNCTION</scope>
    <scope>DISRUPTION PHENOTYPE</scope>
    <source>
        <strain>cv. Columbia</strain>
    </source>
</reference>
<protein>
    <recommendedName>
        <fullName>Cyclin-dependent kinase B1-2</fullName>
        <shortName>CDKB1;2</shortName>
        <ecNumber>2.7.11.22</ecNumber>
        <ecNumber>2.7.11.23</ecNumber>
    </recommendedName>
</protein>
<organism>
    <name type="scientific">Arabidopsis thaliana</name>
    <name type="common">Mouse-ear cress</name>
    <dbReference type="NCBI Taxonomy" id="3702"/>
    <lineage>
        <taxon>Eukaryota</taxon>
        <taxon>Viridiplantae</taxon>
        <taxon>Streptophyta</taxon>
        <taxon>Embryophyta</taxon>
        <taxon>Tracheophyta</taxon>
        <taxon>Spermatophyta</taxon>
        <taxon>Magnoliopsida</taxon>
        <taxon>eudicotyledons</taxon>
        <taxon>Gunneridae</taxon>
        <taxon>Pentapetalae</taxon>
        <taxon>rosids</taxon>
        <taxon>malvids</taxon>
        <taxon>Brassicales</taxon>
        <taxon>Brassicaceae</taxon>
        <taxon>Camelineae</taxon>
        <taxon>Arabidopsis</taxon>
    </lineage>
</organism>
<keyword id="KW-0025">Alternative splicing</keyword>
<keyword id="KW-0067">ATP-binding</keyword>
<keyword id="KW-0418">Kinase</keyword>
<keyword id="KW-0547">Nucleotide-binding</keyword>
<keyword id="KW-0597">Phosphoprotein</keyword>
<keyword id="KW-1185">Reference proteome</keyword>
<keyword id="KW-0723">Serine/threonine-protein kinase</keyword>
<keyword id="KW-0808">Transferase</keyword>
<sequence>MEKYEKLEKVGEGTYGKVYKAMEKTTGKLVALKKTRLEMDEEGIPPTALREISLLQMLSQSIYIVRLLCVEHVIQSKDSTVSHSPKSNLYLVFEYLDTDLKKFIDSHRKGSNPRPLEASLVQRFMFQLFKGVAHCHSHGVLHRDLKPQNLLLDKDKGILKIADLGLSRAFTVPLKAYTHEIVTLWYRAPEVLLGSTHYSTAVDIWSVGCIFAEMIRRQALFPGDSEFQQLLHIFRLLGTPTEQQWPGVMALRDWHVYPKWEPQDLSRAVPSLSPEGIDLLTQMLKYNPAERISAKAALDHPYFDSLDKSQF</sequence>
<comment type="function">
    <text evidence="6 7">Together with CDKB1-1, promotes both the last division in the stomatal cell lineage as well as the number of stomata (PubMed:20675570). In collaboration with MYB124 and MYB88, restrict the G1/S transition and chloroplast and nuclear number during stomatal formation, and normally maintain fate and developmental progression throughout the stomatal cell lineage (PubMed:24123248).</text>
</comment>
<comment type="catalytic activity">
    <reaction>
        <text>L-seryl-[protein] + ATP = O-phospho-L-seryl-[protein] + ADP + H(+)</text>
        <dbReference type="Rhea" id="RHEA:17989"/>
        <dbReference type="Rhea" id="RHEA-COMP:9863"/>
        <dbReference type="Rhea" id="RHEA-COMP:11604"/>
        <dbReference type="ChEBI" id="CHEBI:15378"/>
        <dbReference type="ChEBI" id="CHEBI:29999"/>
        <dbReference type="ChEBI" id="CHEBI:30616"/>
        <dbReference type="ChEBI" id="CHEBI:83421"/>
        <dbReference type="ChEBI" id="CHEBI:456216"/>
        <dbReference type="EC" id="2.7.11.22"/>
    </reaction>
</comment>
<comment type="catalytic activity">
    <reaction>
        <text>L-threonyl-[protein] + ATP = O-phospho-L-threonyl-[protein] + ADP + H(+)</text>
        <dbReference type="Rhea" id="RHEA:46608"/>
        <dbReference type="Rhea" id="RHEA-COMP:11060"/>
        <dbReference type="Rhea" id="RHEA-COMP:11605"/>
        <dbReference type="ChEBI" id="CHEBI:15378"/>
        <dbReference type="ChEBI" id="CHEBI:30013"/>
        <dbReference type="ChEBI" id="CHEBI:30616"/>
        <dbReference type="ChEBI" id="CHEBI:61977"/>
        <dbReference type="ChEBI" id="CHEBI:456216"/>
        <dbReference type="EC" id="2.7.11.22"/>
    </reaction>
</comment>
<comment type="catalytic activity">
    <reaction>
        <text>[DNA-directed RNA polymerase] + ATP = phospho-[DNA-directed RNA polymerase] + ADP + H(+)</text>
        <dbReference type="Rhea" id="RHEA:10216"/>
        <dbReference type="Rhea" id="RHEA-COMP:11321"/>
        <dbReference type="Rhea" id="RHEA-COMP:11322"/>
        <dbReference type="ChEBI" id="CHEBI:15378"/>
        <dbReference type="ChEBI" id="CHEBI:30616"/>
        <dbReference type="ChEBI" id="CHEBI:43176"/>
        <dbReference type="ChEBI" id="CHEBI:68546"/>
        <dbReference type="ChEBI" id="CHEBI:456216"/>
        <dbReference type="EC" id="2.7.11.23"/>
    </reaction>
</comment>
<comment type="subunit">
    <text evidence="5">Interacts with CKS1.</text>
</comment>
<comment type="alternative products">
    <event type="alternative splicing"/>
    <isoform>
        <id>Q2V419-1</id>
        <name>1</name>
        <sequence type="displayed"/>
    </isoform>
    <isoform>
        <id>Q2V419-2</id>
        <name>2</name>
        <sequence type="described" ref="VSP_026473 VSP_026474"/>
    </isoform>
</comment>
<comment type="tissue specificity">
    <text evidence="5">Expressed in flowers.</text>
</comment>
<comment type="disruption phenotype">
    <text evidence="6 7">No apparent stomatal abnormalities. The double mutant cdkb1;1 cdkb1;2 has a reduced number of abnormal stomata consisting in single guard cells (GC) (PubMed:20675570). The quadruple mutant flp-1 myb88 cdkb1;1 cdkb1;2 has a reduced number of large single guard cells blocked at mitosis, with strongly altered shape and size and characterized by enlarged nucleus due to endomitosis and endocycling, as well as extensive chloroplast replication (PubMed:24123248).</text>
</comment>
<comment type="similarity">
    <text evidence="8">Belongs to the protein kinase superfamily. CMGC Ser/Thr protein kinase family. CDC2/CDKX subfamily.</text>
</comment>
<comment type="sequence caution" evidence="8">
    <conflict type="erroneous termination">
        <sequence resource="EMBL-CDS" id="BAD95353"/>
    </conflict>
    <text>Truncated C-terminus.</text>
</comment>
<proteinExistence type="evidence at protein level"/>
<evidence type="ECO:0000250" key="1">
    <source>
        <dbReference type="UniProtKB" id="P24100"/>
    </source>
</evidence>
<evidence type="ECO:0000250" key="2">
    <source>
        <dbReference type="UniProtKB" id="Q9C9M7"/>
    </source>
</evidence>
<evidence type="ECO:0000255" key="3">
    <source>
        <dbReference type="PROSITE-ProRule" id="PRU00159"/>
    </source>
</evidence>
<evidence type="ECO:0000255" key="4">
    <source>
        <dbReference type="PROSITE-ProRule" id="PRU10027"/>
    </source>
</evidence>
<evidence type="ECO:0000269" key="5">
    <source>
    </source>
</evidence>
<evidence type="ECO:0000269" key="6">
    <source>
    </source>
</evidence>
<evidence type="ECO:0000269" key="7">
    <source>
    </source>
</evidence>
<evidence type="ECO:0000305" key="8"/>
<feature type="chain" id="PRO_0000293114" description="Cyclin-dependent kinase B1-2">
    <location>
        <begin position="1"/>
        <end position="311"/>
    </location>
</feature>
<feature type="domain" description="Protein kinase" evidence="3">
    <location>
        <begin position="4"/>
        <end position="303"/>
    </location>
</feature>
<feature type="active site" description="Proton acceptor" evidence="3 4">
    <location>
        <position position="144"/>
    </location>
</feature>
<feature type="binding site" evidence="3">
    <location>
        <begin position="10"/>
        <end position="18"/>
    </location>
    <ligand>
        <name>ATP</name>
        <dbReference type="ChEBI" id="CHEBI:30616"/>
    </ligand>
</feature>
<feature type="binding site" evidence="3">
    <location>
        <position position="33"/>
    </location>
    <ligand>
        <name>ATP</name>
        <dbReference type="ChEBI" id="CHEBI:30616"/>
    </ligand>
</feature>
<feature type="modified residue" description="Phosphotyrosine" evidence="1">
    <location>
        <position position="15"/>
    </location>
</feature>
<feature type="modified residue" description="Phosphothreonine" evidence="2">
    <location>
        <position position="178"/>
    </location>
</feature>
<feature type="splice variant" id="VSP_026473" description="In isoform 2." evidence="8">
    <original>LLGTPTEQQWPGVMALRDWHVY</original>
    <variation>YLLLVFDANVYVYRNQFRTLAH</variation>
    <location>
        <begin position="236"/>
        <end position="257"/>
    </location>
</feature>
<feature type="splice variant" id="VSP_026474" description="In isoform 2." evidence="8">
    <location>
        <begin position="258"/>
        <end position="311"/>
    </location>
</feature>
<feature type="sequence conflict" description="In Ref. 4; BAD95353." evidence="8" ref="4">
    <original>L</original>
    <variation>I</variation>
    <location>
        <position position="231"/>
    </location>
</feature>
<accession>Q2V419</accession>
<accession>Q56XK5</accession>
<accession>Q9ZVI4</accession>
<gene>
    <name type="primary">CDKB1-2</name>
    <name type="ordered locus">At2g38620</name>
    <name type="ORF">T6A23.18</name>
</gene>
<name>CKB12_ARATH</name>
<dbReference type="EC" id="2.7.11.22"/>
<dbReference type="EC" id="2.7.11.23"/>
<dbReference type="EMBL" id="AJ297937">
    <property type="protein sequence ID" value="CAC34053.1"/>
    <property type="molecule type" value="mRNA"/>
</dbReference>
<dbReference type="EMBL" id="AC005499">
    <property type="protein sequence ID" value="AAC67356.1"/>
    <property type="molecule type" value="Genomic_DNA"/>
</dbReference>
<dbReference type="EMBL" id="CP002685">
    <property type="protein sequence ID" value="AEC09557.1"/>
    <property type="molecule type" value="Genomic_DNA"/>
</dbReference>
<dbReference type="EMBL" id="CP002685">
    <property type="protein sequence ID" value="AEC09558.1"/>
    <property type="molecule type" value="Genomic_DNA"/>
</dbReference>
<dbReference type="EMBL" id="CP002685">
    <property type="protein sequence ID" value="ANM62340.1"/>
    <property type="molecule type" value="Genomic_DNA"/>
</dbReference>
<dbReference type="EMBL" id="AK221669">
    <property type="protein sequence ID" value="BAD95353.1"/>
    <property type="status" value="ALT_SEQ"/>
    <property type="molecule type" value="mRNA"/>
</dbReference>
<dbReference type="PIR" id="C84807">
    <property type="entry name" value="C84807"/>
</dbReference>
<dbReference type="RefSeq" id="NP_001031507.1">
    <molecule id="Q2V419-1"/>
    <property type="nucleotide sequence ID" value="NM_001036430.3"/>
</dbReference>
<dbReference type="RefSeq" id="NP_001324504.1">
    <molecule id="Q2V419-2"/>
    <property type="nucleotide sequence ID" value="NM_001336710.1"/>
</dbReference>
<dbReference type="RefSeq" id="NP_181396.2">
    <molecule id="Q2V419-2"/>
    <property type="nucleotide sequence ID" value="NM_129419.3"/>
</dbReference>
<dbReference type="SMR" id="Q2V419"/>
<dbReference type="BioGRID" id="3786">
    <property type="interactions" value="41"/>
</dbReference>
<dbReference type="FunCoup" id="Q2V419">
    <property type="interactions" value="263"/>
</dbReference>
<dbReference type="IntAct" id="Q2V419">
    <property type="interactions" value="9"/>
</dbReference>
<dbReference type="STRING" id="3702.Q2V419"/>
<dbReference type="iPTMnet" id="Q2V419"/>
<dbReference type="PaxDb" id="3702-AT2G38620.2"/>
<dbReference type="ProteomicsDB" id="246701">
    <molecule id="Q2V419-1"/>
</dbReference>
<dbReference type="EnsemblPlants" id="AT2G38620.1">
    <molecule id="Q2V419-2"/>
    <property type="protein sequence ID" value="AT2G38620.1"/>
    <property type="gene ID" value="AT2G38620"/>
</dbReference>
<dbReference type="EnsemblPlants" id="AT2G38620.2">
    <molecule id="Q2V419-1"/>
    <property type="protein sequence ID" value="AT2G38620.2"/>
    <property type="gene ID" value="AT2G38620"/>
</dbReference>
<dbReference type="EnsemblPlants" id="AT2G38620.3">
    <molecule id="Q2V419-2"/>
    <property type="protein sequence ID" value="AT2G38620.3"/>
    <property type="gene ID" value="AT2G38620"/>
</dbReference>
<dbReference type="GeneID" id="818444"/>
<dbReference type="Gramene" id="AT2G38620.1">
    <molecule id="Q2V419-2"/>
    <property type="protein sequence ID" value="AT2G38620.1"/>
    <property type="gene ID" value="AT2G38620"/>
</dbReference>
<dbReference type="Gramene" id="AT2G38620.2">
    <molecule id="Q2V419-1"/>
    <property type="protein sequence ID" value="AT2G38620.2"/>
    <property type="gene ID" value="AT2G38620"/>
</dbReference>
<dbReference type="Gramene" id="AT2G38620.3">
    <molecule id="Q2V419-2"/>
    <property type="protein sequence ID" value="AT2G38620.3"/>
    <property type="gene ID" value="AT2G38620"/>
</dbReference>
<dbReference type="KEGG" id="ath:AT2G38620"/>
<dbReference type="Araport" id="AT2G38620"/>
<dbReference type="TAIR" id="AT2G38620">
    <property type="gene designation" value="CDKB1"/>
</dbReference>
<dbReference type="eggNOG" id="KOG0594">
    <property type="taxonomic scope" value="Eukaryota"/>
</dbReference>
<dbReference type="HOGENOM" id="CLU_000288_181_6_1"/>
<dbReference type="InParanoid" id="Q2V419"/>
<dbReference type="OMA" id="PGTCLRE"/>
<dbReference type="PhylomeDB" id="Q2V419"/>
<dbReference type="PRO" id="PR:Q2V419"/>
<dbReference type="Proteomes" id="UP000006548">
    <property type="component" value="Chromosome 2"/>
</dbReference>
<dbReference type="ExpressionAtlas" id="Q2V419">
    <property type="expression patterns" value="baseline and differential"/>
</dbReference>
<dbReference type="GO" id="GO:0000307">
    <property type="term" value="C:cyclin-dependent protein kinase holoenzyme complex"/>
    <property type="evidence" value="ECO:0000250"/>
    <property type="project" value="TAIR"/>
</dbReference>
<dbReference type="GO" id="GO:0005524">
    <property type="term" value="F:ATP binding"/>
    <property type="evidence" value="ECO:0007669"/>
    <property type="project" value="UniProtKB-KW"/>
</dbReference>
<dbReference type="GO" id="GO:0030332">
    <property type="term" value="F:cyclin binding"/>
    <property type="evidence" value="ECO:0000353"/>
    <property type="project" value="TAIR"/>
</dbReference>
<dbReference type="GO" id="GO:0004693">
    <property type="term" value="F:cyclin-dependent protein serine/threonine kinase activity"/>
    <property type="evidence" value="ECO:0007669"/>
    <property type="project" value="UniProtKB-EC"/>
</dbReference>
<dbReference type="GO" id="GO:0106310">
    <property type="term" value="F:protein serine kinase activity"/>
    <property type="evidence" value="ECO:0007669"/>
    <property type="project" value="RHEA"/>
</dbReference>
<dbReference type="GO" id="GO:0004674">
    <property type="term" value="F:protein serine/threonine kinase activity"/>
    <property type="evidence" value="ECO:0000250"/>
    <property type="project" value="TAIR"/>
</dbReference>
<dbReference type="GO" id="GO:0008353">
    <property type="term" value="F:RNA polymerase II CTD heptapeptide repeat kinase activity"/>
    <property type="evidence" value="ECO:0007669"/>
    <property type="project" value="UniProtKB-EC"/>
</dbReference>
<dbReference type="GO" id="GO:0010444">
    <property type="term" value="P:guard mother cell differentiation"/>
    <property type="evidence" value="ECO:0000315"/>
    <property type="project" value="UniProtKB"/>
</dbReference>
<dbReference type="GO" id="GO:0051726">
    <property type="term" value="P:regulation of cell cycle"/>
    <property type="evidence" value="ECO:0000304"/>
    <property type="project" value="TAIR"/>
</dbReference>
<dbReference type="GO" id="GO:1902806">
    <property type="term" value="P:regulation of cell cycle G1/S phase transition"/>
    <property type="evidence" value="ECO:0000315"/>
    <property type="project" value="UniProtKB"/>
</dbReference>
<dbReference type="GO" id="GO:0032875">
    <property type="term" value="P:regulation of DNA endoreduplication"/>
    <property type="evidence" value="ECO:0000315"/>
    <property type="project" value="UniProtKB"/>
</dbReference>
<dbReference type="GO" id="GO:2000037">
    <property type="term" value="P:regulation of stomatal complex patterning"/>
    <property type="evidence" value="ECO:0000315"/>
    <property type="project" value="UniProtKB"/>
</dbReference>
<dbReference type="CDD" id="cd07837">
    <property type="entry name" value="STKc_CdkB_plant"/>
    <property type="match status" value="1"/>
</dbReference>
<dbReference type="FunFam" id="1.10.510.10:FF:000281">
    <property type="entry name" value="Cyclin-dependent kinase 2"/>
    <property type="match status" value="1"/>
</dbReference>
<dbReference type="FunFam" id="3.30.200.20:FF:000231">
    <property type="entry name" value="Cyclin-dependent kinase B2,2"/>
    <property type="match status" value="1"/>
</dbReference>
<dbReference type="Gene3D" id="3.30.200.20">
    <property type="entry name" value="Phosphorylase Kinase, domain 1"/>
    <property type="match status" value="1"/>
</dbReference>
<dbReference type="Gene3D" id="1.10.510.10">
    <property type="entry name" value="Transferase(Phosphotransferase) domain 1"/>
    <property type="match status" value="1"/>
</dbReference>
<dbReference type="InterPro" id="IPR050108">
    <property type="entry name" value="CDK"/>
</dbReference>
<dbReference type="InterPro" id="IPR011009">
    <property type="entry name" value="Kinase-like_dom_sf"/>
</dbReference>
<dbReference type="InterPro" id="IPR000719">
    <property type="entry name" value="Prot_kinase_dom"/>
</dbReference>
<dbReference type="InterPro" id="IPR017441">
    <property type="entry name" value="Protein_kinase_ATP_BS"/>
</dbReference>
<dbReference type="InterPro" id="IPR008271">
    <property type="entry name" value="Ser/Thr_kinase_AS"/>
</dbReference>
<dbReference type="PANTHER" id="PTHR24056">
    <property type="entry name" value="CELL DIVISION PROTEIN KINASE"/>
    <property type="match status" value="1"/>
</dbReference>
<dbReference type="PANTHER" id="PTHR24056:SF254">
    <property type="entry name" value="CYCLIN-DEPENDENT KINASE 2"/>
    <property type="match status" value="1"/>
</dbReference>
<dbReference type="Pfam" id="PF00069">
    <property type="entry name" value="Pkinase"/>
    <property type="match status" value="1"/>
</dbReference>
<dbReference type="SMART" id="SM00220">
    <property type="entry name" value="S_TKc"/>
    <property type="match status" value="1"/>
</dbReference>
<dbReference type="SUPFAM" id="SSF56112">
    <property type="entry name" value="Protein kinase-like (PK-like)"/>
    <property type="match status" value="1"/>
</dbReference>
<dbReference type="PROSITE" id="PS00107">
    <property type="entry name" value="PROTEIN_KINASE_ATP"/>
    <property type="match status" value="1"/>
</dbReference>
<dbReference type="PROSITE" id="PS50011">
    <property type="entry name" value="PROTEIN_KINASE_DOM"/>
    <property type="match status" value="1"/>
</dbReference>
<dbReference type="PROSITE" id="PS00108">
    <property type="entry name" value="PROTEIN_KINASE_ST"/>
    <property type="match status" value="1"/>
</dbReference>